<dbReference type="EC" id="3.2.-.-" evidence="1"/>
<dbReference type="EMBL" id="CP000961">
    <property type="protein sequence ID" value="ACA85413.1"/>
    <property type="molecule type" value="Genomic_DNA"/>
</dbReference>
<dbReference type="RefSeq" id="WP_012323759.1">
    <property type="nucleotide sequence ID" value="NC_010506.1"/>
</dbReference>
<dbReference type="SMR" id="B1KHA5"/>
<dbReference type="STRING" id="392500.Swoo_1120"/>
<dbReference type="KEGG" id="swd:Swoo_1120"/>
<dbReference type="eggNOG" id="COG1957">
    <property type="taxonomic scope" value="Bacteria"/>
</dbReference>
<dbReference type="HOGENOM" id="CLU_036838_2_0_6"/>
<dbReference type="Proteomes" id="UP000002168">
    <property type="component" value="Chromosome"/>
</dbReference>
<dbReference type="GO" id="GO:0005829">
    <property type="term" value="C:cytosol"/>
    <property type="evidence" value="ECO:0007669"/>
    <property type="project" value="TreeGrafter"/>
</dbReference>
<dbReference type="GO" id="GO:0008477">
    <property type="term" value="F:purine nucleosidase activity"/>
    <property type="evidence" value="ECO:0007669"/>
    <property type="project" value="TreeGrafter"/>
</dbReference>
<dbReference type="GO" id="GO:0045437">
    <property type="term" value="F:uridine nucleosidase activity"/>
    <property type="evidence" value="ECO:0007669"/>
    <property type="project" value="InterPro"/>
</dbReference>
<dbReference type="GO" id="GO:0015949">
    <property type="term" value="P:nucleobase-containing small molecule interconversion"/>
    <property type="evidence" value="ECO:0007669"/>
    <property type="project" value="InterPro"/>
</dbReference>
<dbReference type="GO" id="GO:0006152">
    <property type="term" value="P:purine nucleoside catabolic process"/>
    <property type="evidence" value="ECO:0007669"/>
    <property type="project" value="TreeGrafter"/>
</dbReference>
<dbReference type="GO" id="GO:0006206">
    <property type="term" value="P:pyrimidine nucleobase metabolic process"/>
    <property type="evidence" value="ECO:0007669"/>
    <property type="project" value="UniProtKB-UniRule"/>
</dbReference>
<dbReference type="CDD" id="cd02651">
    <property type="entry name" value="nuc_hydro_IU_UC_XIUA"/>
    <property type="match status" value="1"/>
</dbReference>
<dbReference type="FunFam" id="3.90.245.10:FF:000001">
    <property type="entry name" value="Pyrimidine-specific ribonucleoside hydrolase RihA"/>
    <property type="match status" value="1"/>
</dbReference>
<dbReference type="Gene3D" id="3.90.245.10">
    <property type="entry name" value="Ribonucleoside hydrolase-like"/>
    <property type="match status" value="1"/>
</dbReference>
<dbReference type="HAMAP" id="MF_01431">
    <property type="entry name" value="Pyrim_hydro_RihA"/>
    <property type="match status" value="1"/>
</dbReference>
<dbReference type="InterPro" id="IPR015910">
    <property type="entry name" value="I/U_nuclsd_hydro_CS"/>
</dbReference>
<dbReference type="InterPro" id="IPR001910">
    <property type="entry name" value="Inosine/uridine_hydrolase_dom"/>
</dbReference>
<dbReference type="InterPro" id="IPR023186">
    <property type="entry name" value="IUNH"/>
</dbReference>
<dbReference type="InterPro" id="IPR022975">
    <property type="entry name" value="Pyrim_hydro_RihA"/>
</dbReference>
<dbReference type="InterPro" id="IPR036452">
    <property type="entry name" value="Ribo_hydro-like"/>
</dbReference>
<dbReference type="NCBIfam" id="NF007761">
    <property type="entry name" value="PRK10443.1"/>
    <property type="match status" value="1"/>
</dbReference>
<dbReference type="PANTHER" id="PTHR12304">
    <property type="entry name" value="INOSINE-URIDINE PREFERRING NUCLEOSIDE HYDROLASE"/>
    <property type="match status" value="1"/>
</dbReference>
<dbReference type="PANTHER" id="PTHR12304:SF4">
    <property type="entry name" value="URIDINE NUCLEOSIDASE"/>
    <property type="match status" value="1"/>
</dbReference>
<dbReference type="Pfam" id="PF01156">
    <property type="entry name" value="IU_nuc_hydro"/>
    <property type="match status" value="1"/>
</dbReference>
<dbReference type="SUPFAM" id="SSF53590">
    <property type="entry name" value="Nucleoside hydrolase"/>
    <property type="match status" value="1"/>
</dbReference>
<dbReference type="PROSITE" id="PS01247">
    <property type="entry name" value="IUNH"/>
    <property type="match status" value="1"/>
</dbReference>
<proteinExistence type="inferred from homology"/>
<name>RIHA_SHEWM</name>
<comment type="function">
    <text evidence="1">Hydrolyzes cytidine or uridine to ribose and cytosine or uracil, respectively.</text>
</comment>
<comment type="similarity">
    <text evidence="1">Belongs to the IUNH family. RihA subfamily.</text>
</comment>
<keyword id="KW-0326">Glycosidase</keyword>
<keyword id="KW-0378">Hydrolase</keyword>
<keyword id="KW-1185">Reference proteome</keyword>
<reference key="1">
    <citation type="submission" date="2008-02" db="EMBL/GenBank/DDBJ databases">
        <title>Complete sequence of Shewanella woodyi ATCC 51908.</title>
        <authorList>
            <consortium name="US DOE Joint Genome Institute"/>
            <person name="Copeland A."/>
            <person name="Lucas S."/>
            <person name="Lapidus A."/>
            <person name="Glavina del Rio T."/>
            <person name="Dalin E."/>
            <person name="Tice H."/>
            <person name="Bruce D."/>
            <person name="Goodwin L."/>
            <person name="Pitluck S."/>
            <person name="Sims D."/>
            <person name="Brettin T."/>
            <person name="Detter J.C."/>
            <person name="Han C."/>
            <person name="Kuske C.R."/>
            <person name="Schmutz J."/>
            <person name="Larimer F."/>
            <person name="Land M."/>
            <person name="Hauser L."/>
            <person name="Kyrpides N."/>
            <person name="Lykidis A."/>
            <person name="Zhao J.-S."/>
            <person name="Richardson P."/>
        </authorList>
    </citation>
    <scope>NUCLEOTIDE SEQUENCE [LARGE SCALE GENOMIC DNA]</scope>
    <source>
        <strain>ATCC 51908 / MS32</strain>
    </source>
</reference>
<organism>
    <name type="scientific">Shewanella woodyi (strain ATCC 51908 / MS32)</name>
    <dbReference type="NCBI Taxonomy" id="392500"/>
    <lineage>
        <taxon>Bacteria</taxon>
        <taxon>Pseudomonadati</taxon>
        <taxon>Pseudomonadota</taxon>
        <taxon>Gammaproteobacteria</taxon>
        <taxon>Alteromonadales</taxon>
        <taxon>Shewanellaceae</taxon>
        <taxon>Shewanella</taxon>
    </lineage>
</organism>
<accession>B1KHA5</accession>
<feature type="chain" id="PRO_1000145806" description="Pyrimidine-specific ribonucleoside hydrolase RihA">
    <location>
        <begin position="1"/>
        <end position="312"/>
    </location>
</feature>
<feature type="active site" evidence="1">
    <location>
        <position position="240"/>
    </location>
</feature>
<sequence>MTRPIILDCDPGHDDAIAIILALSSDAFSPLAVTTSAGNQTPDKTLNNALRILTLLGRSDIPVAGGAVKPLARELIIADNVHGETGLDGPVLPDPSFAPQAMTAVELMALKIKQSQAPVTLVPTGPLTNIALLLATHPELHSNIEQIVLMGGAAGVGNWTPAAEFNIFVDPEAADMVFKAGIPITMCGLDVTHQAQVMDEDIARIRAIENPIAQCVADLLDFFILYHRDPKWGFTGAPLHDPCTIAWLLKPELFTAQQAWVGIETKGEHTQGMTVVDRYGLTGNQANATVLFDIDRAGFIDLLAQSLETYSR</sequence>
<evidence type="ECO:0000255" key="1">
    <source>
        <dbReference type="HAMAP-Rule" id="MF_01431"/>
    </source>
</evidence>
<gene>
    <name evidence="1" type="primary">rihA</name>
    <name type="ordered locus">Swoo_1120</name>
</gene>
<protein>
    <recommendedName>
        <fullName evidence="1">Pyrimidine-specific ribonucleoside hydrolase RihA</fullName>
        <ecNumber evidence="1">3.2.-.-</ecNumber>
    </recommendedName>
    <alternativeName>
        <fullName evidence="1">Cytidine/uridine-specific hydrolase</fullName>
    </alternativeName>
</protein>